<name>DEF_MYCGI</name>
<proteinExistence type="inferred from homology"/>
<comment type="function">
    <text evidence="1">Removes the formyl group from the N-terminal Met of newly synthesized proteins. Requires at least a dipeptide for an efficient rate of reaction. N-terminal L-methionine is a prerequisite for activity but the enzyme has broad specificity at other positions.</text>
</comment>
<comment type="catalytic activity">
    <reaction evidence="1">
        <text>N-terminal N-formyl-L-methionyl-[peptide] + H2O = N-terminal L-methionyl-[peptide] + formate</text>
        <dbReference type="Rhea" id="RHEA:24420"/>
        <dbReference type="Rhea" id="RHEA-COMP:10639"/>
        <dbReference type="Rhea" id="RHEA-COMP:10640"/>
        <dbReference type="ChEBI" id="CHEBI:15377"/>
        <dbReference type="ChEBI" id="CHEBI:15740"/>
        <dbReference type="ChEBI" id="CHEBI:49298"/>
        <dbReference type="ChEBI" id="CHEBI:64731"/>
        <dbReference type="EC" id="3.5.1.88"/>
    </reaction>
</comment>
<comment type="cofactor">
    <cofactor evidence="1">
        <name>Fe(2+)</name>
        <dbReference type="ChEBI" id="CHEBI:29033"/>
    </cofactor>
    <text evidence="1">Binds 1 Fe(2+) ion.</text>
</comment>
<comment type="similarity">
    <text evidence="1">Belongs to the polypeptide deformylase family.</text>
</comment>
<protein>
    <recommendedName>
        <fullName evidence="1">Peptide deformylase</fullName>
        <shortName evidence="1">PDF</shortName>
        <ecNumber evidence="1">3.5.1.88</ecNumber>
    </recommendedName>
    <alternativeName>
        <fullName evidence="1">Polypeptide deformylase</fullName>
    </alternativeName>
</protein>
<sequence length="197" mass="21093">MAVRPICIVGDPVLHTATEPIPVGPDGSLPADLADLITDLYDTMDAAHGVGLAANQIGVNKRVFVYDCADARKKTVRRRGVVVNPVLETSEVPETMPDPEDDDEGCLSVPGESFPTGRADWARVTGLDADGTPITIEGTDLFARMLQHETGHLDGFLYLDSLIGRNARAAKRAVKSHGWGVPGLTWMPGEDPDPFGH</sequence>
<accession>A4T2T4</accession>
<organism>
    <name type="scientific">Mycolicibacterium gilvum (strain PYR-GCK)</name>
    <name type="common">Mycobacterium gilvum (strain PYR-GCK)</name>
    <dbReference type="NCBI Taxonomy" id="350054"/>
    <lineage>
        <taxon>Bacteria</taxon>
        <taxon>Bacillati</taxon>
        <taxon>Actinomycetota</taxon>
        <taxon>Actinomycetes</taxon>
        <taxon>Mycobacteriales</taxon>
        <taxon>Mycobacteriaceae</taxon>
        <taxon>Mycolicibacterium</taxon>
    </lineage>
</organism>
<dbReference type="EC" id="3.5.1.88" evidence="1"/>
<dbReference type="EMBL" id="CP000656">
    <property type="protein sequence ID" value="ABP42670.1"/>
    <property type="molecule type" value="Genomic_DNA"/>
</dbReference>
<dbReference type="SMR" id="A4T2T4"/>
<dbReference type="STRING" id="350054.Mflv_0175"/>
<dbReference type="KEGG" id="mgi:Mflv_0175"/>
<dbReference type="eggNOG" id="COG0242">
    <property type="taxonomic scope" value="Bacteria"/>
</dbReference>
<dbReference type="HOGENOM" id="CLU_061901_1_2_11"/>
<dbReference type="OrthoDB" id="9804313at2"/>
<dbReference type="GO" id="GO:0046872">
    <property type="term" value="F:metal ion binding"/>
    <property type="evidence" value="ECO:0007669"/>
    <property type="project" value="UniProtKB-KW"/>
</dbReference>
<dbReference type="GO" id="GO:0042586">
    <property type="term" value="F:peptide deformylase activity"/>
    <property type="evidence" value="ECO:0007669"/>
    <property type="project" value="UniProtKB-UniRule"/>
</dbReference>
<dbReference type="GO" id="GO:0043686">
    <property type="term" value="P:co-translational protein modification"/>
    <property type="evidence" value="ECO:0007669"/>
    <property type="project" value="TreeGrafter"/>
</dbReference>
<dbReference type="GO" id="GO:0006412">
    <property type="term" value="P:translation"/>
    <property type="evidence" value="ECO:0007669"/>
    <property type="project" value="UniProtKB-UniRule"/>
</dbReference>
<dbReference type="CDD" id="cd00487">
    <property type="entry name" value="Pep_deformylase"/>
    <property type="match status" value="1"/>
</dbReference>
<dbReference type="Gene3D" id="3.90.45.10">
    <property type="entry name" value="Peptide deformylase"/>
    <property type="match status" value="1"/>
</dbReference>
<dbReference type="HAMAP" id="MF_00163">
    <property type="entry name" value="Pep_deformylase"/>
    <property type="match status" value="1"/>
</dbReference>
<dbReference type="InterPro" id="IPR023635">
    <property type="entry name" value="Peptide_deformylase"/>
</dbReference>
<dbReference type="InterPro" id="IPR036821">
    <property type="entry name" value="Peptide_deformylase_sf"/>
</dbReference>
<dbReference type="NCBIfam" id="TIGR00079">
    <property type="entry name" value="pept_deformyl"/>
    <property type="match status" value="1"/>
</dbReference>
<dbReference type="NCBIfam" id="NF001159">
    <property type="entry name" value="PRK00150.1-3"/>
    <property type="match status" value="1"/>
</dbReference>
<dbReference type="NCBIfam" id="NF009483">
    <property type="entry name" value="PRK12846.1-4"/>
    <property type="match status" value="1"/>
</dbReference>
<dbReference type="PANTHER" id="PTHR10458">
    <property type="entry name" value="PEPTIDE DEFORMYLASE"/>
    <property type="match status" value="1"/>
</dbReference>
<dbReference type="PANTHER" id="PTHR10458:SF2">
    <property type="entry name" value="PEPTIDE DEFORMYLASE, MITOCHONDRIAL"/>
    <property type="match status" value="1"/>
</dbReference>
<dbReference type="Pfam" id="PF01327">
    <property type="entry name" value="Pep_deformylase"/>
    <property type="match status" value="1"/>
</dbReference>
<dbReference type="PIRSF" id="PIRSF004749">
    <property type="entry name" value="Pep_def"/>
    <property type="match status" value="1"/>
</dbReference>
<dbReference type="PRINTS" id="PR01576">
    <property type="entry name" value="PDEFORMYLASE"/>
</dbReference>
<dbReference type="SUPFAM" id="SSF56420">
    <property type="entry name" value="Peptide deformylase"/>
    <property type="match status" value="1"/>
</dbReference>
<keyword id="KW-0378">Hydrolase</keyword>
<keyword id="KW-0408">Iron</keyword>
<keyword id="KW-0479">Metal-binding</keyword>
<keyword id="KW-0648">Protein biosynthesis</keyword>
<feature type="chain" id="PRO_1000076946" description="Peptide deformylase">
    <location>
        <begin position="1"/>
        <end position="197"/>
    </location>
</feature>
<feature type="active site" evidence="1">
    <location>
        <position position="149"/>
    </location>
</feature>
<feature type="binding site" evidence="1">
    <location>
        <position position="106"/>
    </location>
    <ligand>
        <name>Fe cation</name>
        <dbReference type="ChEBI" id="CHEBI:24875"/>
    </ligand>
</feature>
<feature type="binding site" evidence="1">
    <location>
        <position position="148"/>
    </location>
    <ligand>
        <name>Fe cation</name>
        <dbReference type="ChEBI" id="CHEBI:24875"/>
    </ligand>
</feature>
<feature type="binding site" evidence="1">
    <location>
        <position position="152"/>
    </location>
    <ligand>
        <name>Fe cation</name>
        <dbReference type="ChEBI" id="CHEBI:24875"/>
    </ligand>
</feature>
<evidence type="ECO:0000255" key="1">
    <source>
        <dbReference type="HAMAP-Rule" id="MF_00163"/>
    </source>
</evidence>
<gene>
    <name evidence="1" type="primary">def</name>
    <name type="ordered locus">Mflv_0175</name>
</gene>
<reference key="1">
    <citation type="submission" date="2007-04" db="EMBL/GenBank/DDBJ databases">
        <title>Complete sequence of chromosome of Mycobacterium gilvum PYR-GCK.</title>
        <authorList>
            <consortium name="US DOE Joint Genome Institute"/>
            <person name="Copeland A."/>
            <person name="Lucas S."/>
            <person name="Lapidus A."/>
            <person name="Barry K."/>
            <person name="Detter J.C."/>
            <person name="Glavina del Rio T."/>
            <person name="Hammon N."/>
            <person name="Israni S."/>
            <person name="Dalin E."/>
            <person name="Tice H."/>
            <person name="Pitluck S."/>
            <person name="Chain P."/>
            <person name="Malfatti S."/>
            <person name="Shin M."/>
            <person name="Vergez L."/>
            <person name="Schmutz J."/>
            <person name="Larimer F."/>
            <person name="Land M."/>
            <person name="Hauser L."/>
            <person name="Kyrpides N."/>
            <person name="Mikhailova N."/>
            <person name="Miller C."/>
            <person name="Richardson P."/>
        </authorList>
    </citation>
    <scope>NUCLEOTIDE SEQUENCE [LARGE SCALE GENOMIC DNA]</scope>
    <source>
        <strain>PYR-GCK</strain>
    </source>
</reference>